<feature type="chain" id="PRO_0000220452" description="Cytochrome b6-f complex subunit 6">
    <location>
        <begin position="1"/>
        <end position="31"/>
    </location>
</feature>
<feature type="transmembrane region" description="Helical" evidence="1">
    <location>
        <begin position="4"/>
        <end position="24"/>
    </location>
</feature>
<protein>
    <recommendedName>
        <fullName evidence="1">Cytochrome b6-f complex subunit 6</fullName>
    </recommendedName>
    <alternativeName>
        <fullName evidence="1">Cytochrome b6-f complex subunit PetL</fullName>
    </alternativeName>
    <alternativeName>
        <fullName evidence="1">Cytochrome b6-f complex subunit VI</fullName>
    </alternativeName>
</protein>
<dbReference type="EMBL" id="AJ704444">
    <property type="protein sequence ID" value="CAG28656.1"/>
    <property type="molecule type" value="Genomic_DNA"/>
</dbReference>
<dbReference type="SMR" id="Q5K3S0"/>
<dbReference type="GO" id="GO:0009535">
    <property type="term" value="C:chloroplast thylakoid membrane"/>
    <property type="evidence" value="ECO:0007669"/>
    <property type="project" value="UniProtKB-SubCell"/>
</dbReference>
<dbReference type="GO" id="GO:0009512">
    <property type="term" value="C:cytochrome b6f complex"/>
    <property type="evidence" value="ECO:0007669"/>
    <property type="project" value="InterPro"/>
</dbReference>
<dbReference type="GO" id="GO:0045158">
    <property type="term" value="F:electron transporter, transferring electrons within cytochrome b6/f complex of photosystem II activity"/>
    <property type="evidence" value="ECO:0007669"/>
    <property type="project" value="UniProtKB-UniRule"/>
</dbReference>
<dbReference type="GO" id="GO:0015979">
    <property type="term" value="P:photosynthesis"/>
    <property type="evidence" value="ECO:0007669"/>
    <property type="project" value="UniProtKB-KW"/>
</dbReference>
<dbReference type="HAMAP" id="MF_00433">
    <property type="entry name" value="Cytb6_f_PetL"/>
    <property type="match status" value="1"/>
</dbReference>
<dbReference type="InterPro" id="IPR007802">
    <property type="entry name" value="Cyt_b6/f_cplx_su6"/>
</dbReference>
<dbReference type="PANTHER" id="PTHR37266">
    <property type="entry name" value="CYTOCHROME B6-F COMPLEX SUBUNIT 6"/>
    <property type="match status" value="1"/>
</dbReference>
<dbReference type="PANTHER" id="PTHR37266:SF1">
    <property type="entry name" value="CYTOCHROME B6-F COMPLEX SUBUNIT 6"/>
    <property type="match status" value="1"/>
</dbReference>
<dbReference type="Pfam" id="PF05115">
    <property type="entry name" value="PetL"/>
    <property type="match status" value="1"/>
</dbReference>
<dbReference type="SUPFAM" id="SSF103436">
    <property type="entry name" value="PetL subunit of the cytochrome b6f complex"/>
    <property type="match status" value="1"/>
</dbReference>
<geneLocation type="chloroplast"/>
<accession>Q5K3S0</accession>
<comment type="function">
    <text evidence="1">Component of the cytochrome b6-f complex, which mediates electron transfer between photosystem II (PSII) and photosystem I (PSI), cyclic electron flow around PSI, and state transitions. PetL is important for photoautotrophic growth as well as for electron transfer efficiency and stability of the cytochrome b6-f complex.</text>
</comment>
<comment type="subunit">
    <text evidence="1">The 4 large subunits of the cytochrome b6-f complex are cytochrome b6, subunit IV (17 kDa polypeptide, PetD), cytochrome f and the Rieske protein, while the 4 small subunits are PetG, PetL, PetM and PetN. The complex functions as a dimer.</text>
</comment>
<comment type="subcellular location">
    <subcellularLocation>
        <location evidence="1">Plastid</location>
        <location evidence="1">Chloroplast thylakoid membrane</location>
        <topology evidence="1">Single-pass membrane protein</topology>
    </subcellularLocation>
</comment>
<comment type="RNA editing">
    <location>
        <position position="2" evidence="2"/>
    </location>
</comment>
<comment type="similarity">
    <text evidence="1">Belongs to the PetL family.</text>
</comment>
<keyword id="KW-0150">Chloroplast</keyword>
<keyword id="KW-0249">Electron transport</keyword>
<keyword id="KW-0472">Membrane</keyword>
<keyword id="KW-0602">Photosynthesis</keyword>
<keyword id="KW-0934">Plastid</keyword>
<keyword id="KW-0691">RNA editing</keyword>
<keyword id="KW-0793">Thylakoid</keyword>
<keyword id="KW-0812">Transmembrane</keyword>
<keyword id="KW-1133">Transmembrane helix</keyword>
<keyword id="KW-0813">Transport</keyword>
<evidence type="ECO:0000255" key="1">
    <source>
        <dbReference type="HAMAP-Rule" id="MF_00433"/>
    </source>
</evidence>
<evidence type="ECO:0000269" key="2">
    <source>
    </source>
</evidence>
<name>PETL_HUMLU</name>
<gene>
    <name evidence="1" type="primary">petL</name>
</gene>
<organism>
    <name type="scientific">Humulus lupulus</name>
    <name type="common">European hop</name>
    <dbReference type="NCBI Taxonomy" id="3486"/>
    <lineage>
        <taxon>Eukaryota</taxon>
        <taxon>Viridiplantae</taxon>
        <taxon>Streptophyta</taxon>
        <taxon>Embryophyta</taxon>
        <taxon>Tracheophyta</taxon>
        <taxon>Spermatophyta</taxon>
        <taxon>Magnoliopsida</taxon>
        <taxon>eudicotyledons</taxon>
        <taxon>Gunneridae</taxon>
        <taxon>Pentapetalae</taxon>
        <taxon>rosids</taxon>
        <taxon>fabids</taxon>
        <taxon>Rosales</taxon>
        <taxon>Cannabaceae</taxon>
        <taxon>Humulus</taxon>
    </lineage>
</organism>
<sequence>MLTITSYFGFLLAALTITSALFIGLNKIGLI</sequence>
<reference key="1">
    <citation type="journal article" date="2004" name="Nucleic Acids Res.">
        <title>Rapid evolution of RNA editing sites in a small non-essential plastid gene.</title>
        <authorList>
            <person name="Fiebig A."/>
            <person name="Stegemann S."/>
            <person name="Bock R."/>
        </authorList>
    </citation>
    <scope>NUCLEOTIDE SEQUENCE [GENOMIC DNA]</scope>
    <scope>RNA EDITING</scope>
    <source>
        <tissue>Leaf</tissue>
    </source>
</reference>
<proteinExistence type="evidence at transcript level"/>